<organism>
    <name type="scientific">Proteus mirabilis (strain HI4320)</name>
    <dbReference type="NCBI Taxonomy" id="529507"/>
    <lineage>
        <taxon>Bacteria</taxon>
        <taxon>Pseudomonadati</taxon>
        <taxon>Pseudomonadota</taxon>
        <taxon>Gammaproteobacteria</taxon>
        <taxon>Enterobacterales</taxon>
        <taxon>Morganellaceae</taxon>
        <taxon>Proteus</taxon>
    </lineage>
</organism>
<evidence type="ECO:0000255" key="1">
    <source>
        <dbReference type="HAMAP-Rule" id="MF_00649"/>
    </source>
</evidence>
<evidence type="ECO:0000256" key="2">
    <source>
        <dbReference type="SAM" id="MobiDB-lite"/>
    </source>
</evidence>
<proteinExistence type="inferred from homology"/>
<sequence length="71" mass="8325">MSEKLIVKCPTCRTEVIWDESSPYRPFCCKRCQLIDLGEWAAEEKRIPSQSESNDSDEWSEMPEQDPKPFN</sequence>
<name>YACG_PROMH</name>
<dbReference type="EMBL" id="AM942759">
    <property type="protein sequence ID" value="CAR44115.1"/>
    <property type="molecule type" value="Genomic_DNA"/>
</dbReference>
<dbReference type="RefSeq" id="WP_004244091.1">
    <property type="nucleotide sequence ID" value="NC_010554.1"/>
</dbReference>
<dbReference type="SMR" id="B4F0Z6"/>
<dbReference type="EnsemblBacteria" id="CAR44115">
    <property type="protein sequence ID" value="CAR44115"/>
    <property type="gene ID" value="PMI2054"/>
</dbReference>
<dbReference type="GeneID" id="6802895"/>
<dbReference type="KEGG" id="pmr:PMI2054"/>
<dbReference type="eggNOG" id="COG3024">
    <property type="taxonomic scope" value="Bacteria"/>
</dbReference>
<dbReference type="HOGENOM" id="CLU_178280_3_1_6"/>
<dbReference type="Proteomes" id="UP000008319">
    <property type="component" value="Chromosome"/>
</dbReference>
<dbReference type="GO" id="GO:0008657">
    <property type="term" value="F:DNA topoisomerase type II (double strand cut, ATP-hydrolyzing) inhibitor activity"/>
    <property type="evidence" value="ECO:0007669"/>
    <property type="project" value="UniProtKB-UniRule"/>
</dbReference>
<dbReference type="GO" id="GO:0008270">
    <property type="term" value="F:zinc ion binding"/>
    <property type="evidence" value="ECO:0007669"/>
    <property type="project" value="UniProtKB-UniRule"/>
</dbReference>
<dbReference type="GO" id="GO:0006355">
    <property type="term" value="P:regulation of DNA-templated transcription"/>
    <property type="evidence" value="ECO:0007669"/>
    <property type="project" value="InterPro"/>
</dbReference>
<dbReference type="Gene3D" id="3.30.50.10">
    <property type="entry name" value="Erythroid Transcription Factor GATA-1, subunit A"/>
    <property type="match status" value="1"/>
</dbReference>
<dbReference type="HAMAP" id="MF_00649">
    <property type="entry name" value="DNA_gyrase_inhibitor_YacG"/>
    <property type="match status" value="1"/>
</dbReference>
<dbReference type="InterPro" id="IPR005584">
    <property type="entry name" value="DNA_gyrase_inhibitor_YacG"/>
</dbReference>
<dbReference type="InterPro" id="IPR013088">
    <property type="entry name" value="Znf_NHR/GATA"/>
</dbReference>
<dbReference type="NCBIfam" id="NF001638">
    <property type="entry name" value="PRK00418.1"/>
    <property type="match status" value="1"/>
</dbReference>
<dbReference type="PANTHER" id="PTHR36150">
    <property type="entry name" value="DNA GYRASE INHIBITOR YACG"/>
    <property type="match status" value="1"/>
</dbReference>
<dbReference type="PANTHER" id="PTHR36150:SF1">
    <property type="entry name" value="DNA GYRASE INHIBITOR YACG"/>
    <property type="match status" value="1"/>
</dbReference>
<dbReference type="Pfam" id="PF03884">
    <property type="entry name" value="YacG"/>
    <property type="match status" value="1"/>
</dbReference>
<dbReference type="SUPFAM" id="SSF57716">
    <property type="entry name" value="Glucocorticoid receptor-like (DNA-binding domain)"/>
    <property type="match status" value="1"/>
</dbReference>
<gene>
    <name evidence="1" type="primary">yacG</name>
    <name type="ordered locus">PMI2054</name>
</gene>
<comment type="function">
    <text evidence="1">Inhibits all the catalytic activities of DNA gyrase by preventing its interaction with DNA. Acts by binding directly to the C-terminal domain of GyrB, which probably disrupts DNA binding by the gyrase.</text>
</comment>
<comment type="cofactor">
    <cofactor evidence="1">
        <name>Zn(2+)</name>
        <dbReference type="ChEBI" id="CHEBI:29105"/>
    </cofactor>
    <text evidence="1">Binds 1 zinc ion.</text>
</comment>
<comment type="subunit">
    <text evidence="1">Interacts with GyrB.</text>
</comment>
<comment type="similarity">
    <text evidence="1">Belongs to the DNA gyrase inhibitor YacG family.</text>
</comment>
<feature type="chain" id="PRO_1000130967" description="DNA gyrase inhibitor YacG">
    <location>
        <begin position="1"/>
        <end position="71"/>
    </location>
</feature>
<feature type="region of interest" description="Disordered" evidence="2">
    <location>
        <begin position="43"/>
        <end position="71"/>
    </location>
</feature>
<feature type="compositionally biased region" description="Acidic residues" evidence="2">
    <location>
        <begin position="54"/>
        <end position="64"/>
    </location>
</feature>
<feature type="binding site" evidence="1">
    <location>
        <position position="9"/>
    </location>
    <ligand>
        <name>Zn(2+)</name>
        <dbReference type="ChEBI" id="CHEBI:29105"/>
    </ligand>
</feature>
<feature type="binding site" evidence="1">
    <location>
        <position position="12"/>
    </location>
    <ligand>
        <name>Zn(2+)</name>
        <dbReference type="ChEBI" id="CHEBI:29105"/>
    </ligand>
</feature>
<feature type="binding site" evidence="1">
    <location>
        <position position="28"/>
    </location>
    <ligand>
        <name>Zn(2+)</name>
        <dbReference type="ChEBI" id="CHEBI:29105"/>
    </ligand>
</feature>
<feature type="binding site" evidence="1">
    <location>
        <position position="32"/>
    </location>
    <ligand>
        <name>Zn(2+)</name>
        <dbReference type="ChEBI" id="CHEBI:29105"/>
    </ligand>
</feature>
<protein>
    <recommendedName>
        <fullName evidence="1">DNA gyrase inhibitor YacG</fullName>
    </recommendedName>
</protein>
<reference key="1">
    <citation type="journal article" date="2008" name="J. Bacteriol.">
        <title>Complete genome sequence of uropathogenic Proteus mirabilis, a master of both adherence and motility.</title>
        <authorList>
            <person name="Pearson M.M."/>
            <person name="Sebaihia M."/>
            <person name="Churcher C."/>
            <person name="Quail M.A."/>
            <person name="Seshasayee A.S."/>
            <person name="Luscombe N.M."/>
            <person name="Abdellah Z."/>
            <person name="Arrosmith C."/>
            <person name="Atkin B."/>
            <person name="Chillingworth T."/>
            <person name="Hauser H."/>
            <person name="Jagels K."/>
            <person name="Moule S."/>
            <person name="Mungall K."/>
            <person name="Norbertczak H."/>
            <person name="Rabbinowitsch E."/>
            <person name="Walker D."/>
            <person name="Whithead S."/>
            <person name="Thomson N.R."/>
            <person name="Rather P.N."/>
            <person name="Parkhill J."/>
            <person name="Mobley H.L.T."/>
        </authorList>
    </citation>
    <scope>NUCLEOTIDE SEQUENCE [LARGE SCALE GENOMIC DNA]</scope>
    <source>
        <strain>HI4320</strain>
    </source>
</reference>
<accession>B4F0Z6</accession>
<keyword id="KW-0479">Metal-binding</keyword>
<keyword id="KW-1185">Reference proteome</keyword>
<keyword id="KW-0862">Zinc</keyword>